<name>SYR_BART1</name>
<dbReference type="EC" id="6.1.1.19" evidence="1"/>
<dbReference type="EMBL" id="AM260525">
    <property type="protein sequence ID" value="CAK01734.1"/>
    <property type="molecule type" value="Genomic_DNA"/>
</dbReference>
<dbReference type="RefSeq" id="WP_012231915.1">
    <property type="nucleotide sequence ID" value="NC_010161.1"/>
</dbReference>
<dbReference type="SMR" id="A9IVK4"/>
<dbReference type="KEGG" id="btr:BT_1372"/>
<dbReference type="eggNOG" id="COG0018">
    <property type="taxonomic scope" value="Bacteria"/>
</dbReference>
<dbReference type="HOGENOM" id="CLU_006406_0_1_5"/>
<dbReference type="Proteomes" id="UP000001592">
    <property type="component" value="Chromosome"/>
</dbReference>
<dbReference type="GO" id="GO:0005737">
    <property type="term" value="C:cytoplasm"/>
    <property type="evidence" value="ECO:0007669"/>
    <property type="project" value="UniProtKB-SubCell"/>
</dbReference>
<dbReference type="GO" id="GO:0004814">
    <property type="term" value="F:arginine-tRNA ligase activity"/>
    <property type="evidence" value="ECO:0007669"/>
    <property type="project" value="UniProtKB-UniRule"/>
</dbReference>
<dbReference type="GO" id="GO:0005524">
    <property type="term" value="F:ATP binding"/>
    <property type="evidence" value="ECO:0007669"/>
    <property type="project" value="UniProtKB-UniRule"/>
</dbReference>
<dbReference type="GO" id="GO:0006420">
    <property type="term" value="P:arginyl-tRNA aminoacylation"/>
    <property type="evidence" value="ECO:0007669"/>
    <property type="project" value="UniProtKB-UniRule"/>
</dbReference>
<dbReference type="CDD" id="cd00671">
    <property type="entry name" value="ArgRS_core"/>
    <property type="match status" value="1"/>
</dbReference>
<dbReference type="FunFam" id="3.40.50.620:FF:000062">
    <property type="entry name" value="Arginine--tRNA ligase"/>
    <property type="match status" value="1"/>
</dbReference>
<dbReference type="Gene3D" id="3.30.1360.70">
    <property type="entry name" value="Arginyl tRNA synthetase N-terminal domain"/>
    <property type="match status" value="1"/>
</dbReference>
<dbReference type="Gene3D" id="3.40.50.620">
    <property type="entry name" value="HUPs"/>
    <property type="match status" value="1"/>
</dbReference>
<dbReference type="Gene3D" id="1.10.730.10">
    <property type="entry name" value="Isoleucyl-tRNA Synthetase, Domain 1"/>
    <property type="match status" value="1"/>
</dbReference>
<dbReference type="HAMAP" id="MF_00123">
    <property type="entry name" value="Arg_tRNA_synth"/>
    <property type="match status" value="1"/>
</dbReference>
<dbReference type="InterPro" id="IPR001412">
    <property type="entry name" value="aa-tRNA-synth_I_CS"/>
</dbReference>
<dbReference type="InterPro" id="IPR001278">
    <property type="entry name" value="Arg-tRNA-ligase"/>
</dbReference>
<dbReference type="InterPro" id="IPR005148">
    <property type="entry name" value="Arg-tRNA-synth_N"/>
</dbReference>
<dbReference type="InterPro" id="IPR036695">
    <property type="entry name" value="Arg-tRNA-synth_N_sf"/>
</dbReference>
<dbReference type="InterPro" id="IPR035684">
    <property type="entry name" value="ArgRS_core"/>
</dbReference>
<dbReference type="InterPro" id="IPR008909">
    <property type="entry name" value="DALR_anticod-bd"/>
</dbReference>
<dbReference type="InterPro" id="IPR014729">
    <property type="entry name" value="Rossmann-like_a/b/a_fold"/>
</dbReference>
<dbReference type="InterPro" id="IPR009080">
    <property type="entry name" value="tRNAsynth_Ia_anticodon-bd"/>
</dbReference>
<dbReference type="NCBIfam" id="TIGR00456">
    <property type="entry name" value="argS"/>
    <property type="match status" value="1"/>
</dbReference>
<dbReference type="PANTHER" id="PTHR11956:SF5">
    <property type="entry name" value="ARGININE--TRNA LIGASE, CYTOPLASMIC"/>
    <property type="match status" value="1"/>
</dbReference>
<dbReference type="PANTHER" id="PTHR11956">
    <property type="entry name" value="ARGINYL-TRNA SYNTHETASE"/>
    <property type="match status" value="1"/>
</dbReference>
<dbReference type="Pfam" id="PF03485">
    <property type="entry name" value="Arg_tRNA_synt_N"/>
    <property type="match status" value="1"/>
</dbReference>
<dbReference type="Pfam" id="PF05746">
    <property type="entry name" value="DALR_1"/>
    <property type="match status" value="1"/>
</dbReference>
<dbReference type="Pfam" id="PF00750">
    <property type="entry name" value="tRNA-synt_1d"/>
    <property type="match status" value="2"/>
</dbReference>
<dbReference type="PRINTS" id="PR01038">
    <property type="entry name" value="TRNASYNTHARG"/>
</dbReference>
<dbReference type="SMART" id="SM01016">
    <property type="entry name" value="Arg_tRNA_synt_N"/>
    <property type="match status" value="1"/>
</dbReference>
<dbReference type="SMART" id="SM00836">
    <property type="entry name" value="DALR_1"/>
    <property type="match status" value="1"/>
</dbReference>
<dbReference type="SUPFAM" id="SSF47323">
    <property type="entry name" value="Anticodon-binding domain of a subclass of class I aminoacyl-tRNA synthetases"/>
    <property type="match status" value="1"/>
</dbReference>
<dbReference type="SUPFAM" id="SSF55190">
    <property type="entry name" value="Arginyl-tRNA synthetase (ArgRS), N-terminal 'additional' domain"/>
    <property type="match status" value="1"/>
</dbReference>
<dbReference type="SUPFAM" id="SSF52374">
    <property type="entry name" value="Nucleotidylyl transferase"/>
    <property type="match status" value="1"/>
</dbReference>
<dbReference type="PROSITE" id="PS00178">
    <property type="entry name" value="AA_TRNA_LIGASE_I"/>
    <property type="match status" value="1"/>
</dbReference>
<accession>A9IVK4</accession>
<comment type="catalytic activity">
    <reaction evidence="1">
        <text>tRNA(Arg) + L-arginine + ATP = L-arginyl-tRNA(Arg) + AMP + diphosphate</text>
        <dbReference type="Rhea" id="RHEA:20301"/>
        <dbReference type="Rhea" id="RHEA-COMP:9658"/>
        <dbReference type="Rhea" id="RHEA-COMP:9673"/>
        <dbReference type="ChEBI" id="CHEBI:30616"/>
        <dbReference type="ChEBI" id="CHEBI:32682"/>
        <dbReference type="ChEBI" id="CHEBI:33019"/>
        <dbReference type="ChEBI" id="CHEBI:78442"/>
        <dbReference type="ChEBI" id="CHEBI:78513"/>
        <dbReference type="ChEBI" id="CHEBI:456215"/>
        <dbReference type="EC" id="6.1.1.19"/>
    </reaction>
</comment>
<comment type="subunit">
    <text evidence="1">Monomer.</text>
</comment>
<comment type="subcellular location">
    <subcellularLocation>
        <location evidence="1">Cytoplasm</location>
    </subcellularLocation>
</comment>
<comment type="similarity">
    <text evidence="1">Belongs to the class-I aminoacyl-tRNA synthetase family.</text>
</comment>
<protein>
    <recommendedName>
        <fullName evidence="1">Arginine--tRNA ligase</fullName>
        <ecNumber evidence="1">6.1.1.19</ecNumber>
    </recommendedName>
    <alternativeName>
        <fullName evidence="1">Arginyl-tRNA synthetase</fullName>
        <shortName evidence="1">ArgRS</shortName>
    </alternativeName>
</protein>
<sequence length="585" mass="66474">MNIFKNFEKKIKKSIELSDIKGKNGEDLDLSKITVDPPRDSSHGHLSTNAAMVLAKSIGLSPRALADKIIELLKNDISIENIDVAGPGFINIKLTKLFWQDAVKYMLELGLSYGRIPMGQGKRINVEYVSANPTGPMHVGHCRGAVVGDVLSNLLQFAGYNITKEYYINDAGQQIEVLAHSVLLRYREALGQKINEIPEGLYPGEYLIPLGQALAQEFGDQLLTMDRDEALSIVKERAIHTMMSMIREDLAALNIYHDIFFSERMLYADNARAIRNTINDLTLNGYIYKGKLPPPKGQNIEDWEPSEQTLFRSTNVGDDQDRVLIKSDGSYTYFAADVAYFRDKFNRHFDEMIYILGADHAGYVKRLEAMAKAISGNKAKLSVFLCQLVKLFRNGQPVRMSKRAGSFVTLRDVVEEVGRDPVRFMMLYRKCEAPLDFDFAKVTEQSKDNPIFYVQYANARCHSVFRQAQEVLHIESFSNDILITYLHRLIDDNEILLIRKLSEYPRIIEQAVVHKEPHRLAFYLYDLASCFHTHWNKGSENLNLRFIQPHDKELSFARLGLIQAVINILSSGLSIIGVEAPIEMR</sequence>
<organism>
    <name type="scientific">Bartonella tribocorum (strain CIP 105476 / IBS 506)</name>
    <dbReference type="NCBI Taxonomy" id="382640"/>
    <lineage>
        <taxon>Bacteria</taxon>
        <taxon>Pseudomonadati</taxon>
        <taxon>Pseudomonadota</taxon>
        <taxon>Alphaproteobacteria</taxon>
        <taxon>Hyphomicrobiales</taxon>
        <taxon>Bartonellaceae</taxon>
        <taxon>Bartonella</taxon>
    </lineage>
</organism>
<reference key="1">
    <citation type="journal article" date="2007" name="Nat. Genet.">
        <title>Genomic analysis of Bartonella identifies type IV secretion systems as host adaptability factors.</title>
        <authorList>
            <person name="Saenz H.L."/>
            <person name="Engel P."/>
            <person name="Stoeckli M.C."/>
            <person name="Lanz C."/>
            <person name="Raddatz G."/>
            <person name="Vayssier-Taussat M."/>
            <person name="Birtles R."/>
            <person name="Schuster S.C."/>
            <person name="Dehio C."/>
        </authorList>
    </citation>
    <scope>NUCLEOTIDE SEQUENCE [LARGE SCALE GENOMIC DNA]</scope>
    <source>
        <strain>CIP 105476 / IBS 506</strain>
    </source>
</reference>
<evidence type="ECO:0000255" key="1">
    <source>
        <dbReference type="HAMAP-Rule" id="MF_00123"/>
    </source>
</evidence>
<feature type="chain" id="PRO_1000076204" description="Arginine--tRNA ligase">
    <location>
        <begin position="1"/>
        <end position="585"/>
    </location>
</feature>
<feature type="short sequence motif" description="'HIGH' region">
    <location>
        <begin position="131"/>
        <end position="141"/>
    </location>
</feature>
<keyword id="KW-0030">Aminoacyl-tRNA synthetase</keyword>
<keyword id="KW-0067">ATP-binding</keyword>
<keyword id="KW-0963">Cytoplasm</keyword>
<keyword id="KW-0436">Ligase</keyword>
<keyword id="KW-0547">Nucleotide-binding</keyword>
<keyword id="KW-0648">Protein biosynthesis</keyword>
<gene>
    <name evidence="1" type="primary">argS</name>
    <name type="ordered locus">BT_1372</name>
</gene>
<proteinExistence type="inferred from homology"/>